<sequence length="504" mass="54334">MTQTNGFDALHAHAQRLRGAAIPALLAAEPQRPTQYARQVGPLYFNFARQKYDRAALDALFAIARERDLAGAFQRLFRGEQVNVTEQRAALHTALRGDLTDAPVASEAYATAAEVRQRMGALIQQLEATEVTDIVSVGIGGSDLGPRLVADALRPVSGARFRVHFVSNVDGAAMQRTLATLDPARTAGILISKTFGTQETLLNGSILHAWLGGSERLYAVSANPERAAKAFDIAPGRVLPMWDWVGGRYSLWSAVGFPIALAIGFERFEQLLEGAAQFDAHVLNTPLEENVAVLHGLTAVWNRNLLGSATHAVMTYDQRLALLPSYLQQLVMESLGKRVKLDGSAVDSDTVSVWWGGAGTDVQHSFFQALHQGTSVVPADFIGTVHNDDPYAENHVALMANVLAQTEALANGQDSSDPHRSYPGGRPSTVILLDALTPQALGGLISMYEHSVYVQSVMWGINAFDQFGVELGKQLASQLLPALKGEAADVADPVTRELLSKLRG</sequence>
<organism>
    <name type="scientific">Xanthomonas euvesicatoria pv. vesicatoria (strain 85-10)</name>
    <name type="common">Xanthomonas campestris pv. vesicatoria</name>
    <dbReference type="NCBI Taxonomy" id="316273"/>
    <lineage>
        <taxon>Bacteria</taxon>
        <taxon>Pseudomonadati</taxon>
        <taxon>Pseudomonadota</taxon>
        <taxon>Gammaproteobacteria</taxon>
        <taxon>Lysobacterales</taxon>
        <taxon>Lysobacteraceae</taxon>
        <taxon>Xanthomonas</taxon>
    </lineage>
</organism>
<accession>Q3BUL3</accession>
<protein>
    <recommendedName>
        <fullName evidence="1">Glucose-6-phosphate isomerase</fullName>
        <shortName evidence="1">GPI</shortName>
        <ecNumber evidence="1">5.3.1.9</ecNumber>
    </recommendedName>
    <alternativeName>
        <fullName evidence="1">Phosphoglucose isomerase</fullName>
        <shortName evidence="1">PGI</shortName>
    </alternativeName>
    <alternativeName>
        <fullName evidence="1">Phosphohexose isomerase</fullName>
        <shortName evidence="1">PHI</shortName>
    </alternativeName>
</protein>
<reference key="1">
    <citation type="journal article" date="2005" name="J. Bacteriol.">
        <title>Insights into genome plasticity and pathogenicity of the plant pathogenic Bacterium Xanthomonas campestris pv. vesicatoria revealed by the complete genome sequence.</title>
        <authorList>
            <person name="Thieme F."/>
            <person name="Koebnik R."/>
            <person name="Bekel T."/>
            <person name="Berger C."/>
            <person name="Boch J."/>
            <person name="Buettner D."/>
            <person name="Caldana C."/>
            <person name="Gaigalat L."/>
            <person name="Goesmann A."/>
            <person name="Kay S."/>
            <person name="Kirchner O."/>
            <person name="Lanz C."/>
            <person name="Linke B."/>
            <person name="McHardy A.C."/>
            <person name="Meyer F."/>
            <person name="Mittenhuber G."/>
            <person name="Nies D.H."/>
            <person name="Niesbach-Kloesgen U."/>
            <person name="Patschkowski T."/>
            <person name="Rueckert C."/>
            <person name="Rupp O."/>
            <person name="Schneiker S."/>
            <person name="Schuster S.C."/>
            <person name="Vorhoelter F.J."/>
            <person name="Weber E."/>
            <person name="Puehler A."/>
            <person name="Bonas U."/>
            <person name="Bartels D."/>
            <person name="Kaiser O."/>
        </authorList>
    </citation>
    <scope>NUCLEOTIDE SEQUENCE [LARGE SCALE GENOMIC DNA]</scope>
    <source>
        <strain>85-10</strain>
    </source>
</reference>
<gene>
    <name evidence="1" type="primary">pgi</name>
    <name type="ordered locus">XCV1819</name>
</gene>
<keyword id="KW-0963">Cytoplasm</keyword>
<keyword id="KW-0312">Gluconeogenesis</keyword>
<keyword id="KW-0324">Glycolysis</keyword>
<keyword id="KW-0413">Isomerase</keyword>
<evidence type="ECO:0000255" key="1">
    <source>
        <dbReference type="HAMAP-Rule" id="MF_00473"/>
    </source>
</evidence>
<comment type="function">
    <text evidence="1">Catalyzes the reversible isomerization of glucose-6-phosphate to fructose-6-phosphate.</text>
</comment>
<comment type="catalytic activity">
    <reaction evidence="1">
        <text>alpha-D-glucose 6-phosphate = beta-D-fructose 6-phosphate</text>
        <dbReference type="Rhea" id="RHEA:11816"/>
        <dbReference type="ChEBI" id="CHEBI:57634"/>
        <dbReference type="ChEBI" id="CHEBI:58225"/>
        <dbReference type="EC" id="5.3.1.9"/>
    </reaction>
</comment>
<comment type="pathway">
    <text evidence="1">Carbohydrate biosynthesis; gluconeogenesis.</text>
</comment>
<comment type="pathway">
    <text evidence="1">Carbohydrate degradation; glycolysis; D-glyceraldehyde 3-phosphate and glycerone phosphate from D-glucose: step 2/4.</text>
</comment>
<comment type="subcellular location">
    <subcellularLocation>
        <location evidence="1">Cytoplasm</location>
    </subcellularLocation>
</comment>
<comment type="similarity">
    <text evidence="1">Belongs to the GPI family.</text>
</comment>
<feature type="chain" id="PRO_0000230942" description="Glucose-6-phosphate isomerase">
    <location>
        <begin position="1"/>
        <end position="504"/>
    </location>
</feature>
<feature type="active site" description="Proton donor" evidence="1">
    <location>
        <position position="333"/>
    </location>
</feature>
<feature type="active site" evidence="1">
    <location>
        <position position="364"/>
    </location>
</feature>
<feature type="active site" evidence="1">
    <location>
        <position position="473"/>
    </location>
</feature>
<dbReference type="EC" id="5.3.1.9" evidence="1"/>
<dbReference type="EMBL" id="AM039952">
    <property type="protein sequence ID" value="CAJ23496.1"/>
    <property type="molecule type" value="Genomic_DNA"/>
</dbReference>
<dbReference type="RefSeq" id="WP_011347143.1">
    <property type="nucleotide sequence ID" value="NZ_CP017190.1"/>
</dbReference>
<dbReference type="SMR" id="Q3BUL3"/>
<dbReference type="STRING" id="456327.BJD11_13420"/>
<dbReference type="KEGG" id="xcv:XCV1819"/>
<dbReference type="eggNOG" id="COG0166">
    <property type="taxonomic scope" value="Bacteria"/>
</dbReference>
<dbReference type="HOGENOM" id="CLU_017947_3_1_6"/>
<dbReference type="UniPathway" id="UPA00109">
    <property type="reaction ID" value="UER00181"/>
</dbReference>
<dbReference type="UniPathway" id="UPA00138"/>
<dbReference type="Proteomes" id="UP000007069">
    <property type="component" value="Chromosome"/>
</dbReference>
<dbReference type="GO" id="GO:0005829">
    <property type="term" value="C:cytosol"/>
    <property type="evidence" value="ECO:0007669"/>
    <property type="project" value="TreeGrafter"/>
</dbReference>
<dbReference type="GO" id="GO:0097367">
    <property type="term" value="F:carbohydrate derivative binding"/>
    <property type="evidence" value="ECO:0007669"/>
    <property type="project" value="InterPro"/>
</dbReference>
<dbReference type="GO" id="GO:0004347">
    <property type="term" value="F:glucose-6-phosphate isomerase activity"/>
    <property type="evidence" value="ECO:0007669"/>
    <property type="project" value="UniProtKB-UniRule"/>
</dbReference>
<dbReference type="GO" id="GO:0048029">
    <property type="term" value="F:monosaccharide binding"/>
    <property type="evidence" value="ECO:0007669"/>
    <property type="project" value="TreeGrafter"/>
</dbReference>
<dbReference type="GO" id="GO:0006094">
    <property type="term" value="P:gluconeogenesis"/>
    <property type="evidence" value="ECO:0007669"/>
    <property type="project" value="UniProtKB-UniRule"/>
</dbReference>
<dbReference type="GO" id="GO:0051156">
    <property type="term" value="P:glucose 6-phosphate metabolic process"/>
    <property type="evidence" value="ECO:0007669"/>
    <property type="project" value="TreeGrafter"/>
</dbReference>
<dbReference type="GO" id="GO:0006096">
    <property type="term" value="P:glycolytic process"/>
    <property type="evidence" value="ECO:0007669"/>
    <property type="project" value="UniProtKB-UniRule"/>
</dbReference>
<dbReference type="CDD" id="cd05015">
    <property type="entry name" value="SIS_PGI_1"/>
    <property type="match status" value="1"/>
</dbReference>
<dbReference type="CDD" id="cd05016">
    <property type="entry name" value="SIS_PGI_2"/>
    <property type="match status" value="1"/>
</dbReference>
<dbReference type="Gene3D" id="1.10.1390.10">
    <property type="match status" value="1"/>
</dbReference>
<dbReference type="Gene3D" id="3.40.50.10490">
    <property type="entry name" value="Glucose-6-phosphate isomerase like protein, domain 1"/>
    <property type="match status" value="2"/>
</dbReference>
<dbReference type="HAMAP" id="MF_00473">
    <property type="entry name" value="G6P_isomerase"/>
    <property type="match status" value="1"/>
</dbReference>
<dbReference type="InterPro" id="IPR001672">
    <property type="entry name" value="G6P_Isomerase"/>
</dbReference>
<dbReference type="InterPro" id="IPR023096">
    <property type="entry name" value="G6P_Isomerase_C"/>
</dbReference>
<dbReference type="InterPro" id="IPR018189">
    <property type="entry name" value="Phosphoglucose_isomerase_CS"/>
</dbReference>
<dbReference type="InterPro" id="IPR046348">
    <property type="entry name" value="SIS_dom_sf"/>
</dbReference>
<dbReference type="InterPro" id="IPR035476">
    <property type="entry name" value="SIS_PGI_1"/>
</dbReference>
<dbReference type="InterPro" id="IPR035482">
    <property type="entry name" value="SIS_PGI_2"/>
</dbReference>
<dbReference type="NCBIfam" id="NF001211">
    <property type="entry name" value="PRK00179.1"/>
    <property type="match status" value="1"/>
</dbReference>
<dbReference type="PANTHER" id="PTHR11469">
    <property type="entry name" value="GLUCOSE-6-PHOSPHATE ISOMERASE"/>
    <property type="match status" value="1"/>
</dbReference>
<dbReference type="PANTHER" id="PTHR11469:SF1">
    <property type="entry name" value="GLUCOSE-6-PHOSPHATE ISOMERASE"/>
    <property type="match status" value="1"/>
</dbReference>
<dbReference type="Pfam" id="PF00342">
    <property type="entry name" value="PGI"/>
    <property type="match status" value="1"/>
</dbReference>
<dbReference type="PRINTS" id="PR00662">
    <property type="entry name" value="G6PISOMERASE"/>
</dbReference>
<dbReference type="SUPFAM" id="SSF53697">
    <property type="entry name" value="SIS domain"/>
    <property type="match status" value="1"/>
</dbReference>
<dbReference type="PROSITE" id="PS00765">
    <property type="entry name" value="P_GLUCOSE_ISOMERASE_1"/>
    <property type="match status" value="1"/>
</dbReference>
<dbReference type="PROSITE" id="PS00174">
    <property type="entry name" value="P_GLUCOSE_ISOMERASE_2"/>
    <property type="match status" value="1"/>
</dbReference>
<dbReference type="PROSITE" id="PS51463">
    <property type="entry name" value="P_GLUCOSE_ISOMERASE_3"/>
    <property type="match status" value="1"/>
</dbReference>
<proteinExistence type="inferred from homology"/>
<name>G6PI_XANE5</name>